<gene>
    <name type="primary">amd</name>
    <name type="synonym">l(2)amd</name>
    <name type="ORF">CG10501</name>
</gene>
<dbReference type="EC" id="4.1.1.107" evidence="2 3"/>
<dbReference type="EMBL" id="X04695">
    <property type="protein sequence ID" value="CAA28400.1"/>
    <property type="molecule type" value="Genomic_DNA"/>
</dbReference>
<dbReference type="EMBL" id="AE014134">
    <property type="protein sequence ID" value="AAF53760.1"/>
    <property type="molecule type" value="Genomic_DNA"/>
</dbReference>
<dbReference type="EMBL" id="AE014134">
    <property type="protein sequence ID" value="AAF53759.2"/>
    <property type="molecule type" value="Genomic_DNA"/>
</dbReference>
<dbReference type="EMBL" id="BT044421">
    <property type="protein sequence ID" value="ACH92486.1"/>
    <property type="molecule type" value="mRNA"/>
</dbReference>
<dbReference type="PIR" id="A28569">
    <property type="entry name" value="A28569"/>
</dbReference>
<dbReference type="RefSeq" id="NP_476592.1">
    <molecule id="P18486-1"/>
    <property type="nucleotide sequence ID" value="NM_057244.4"/>
</dbReference>
<dbReference type="RefSeq" id="NP_724162.1">
    <molecule id="P18486-2"/>
    <property type="nucleotide sequence ID" value="NM_165278.2"/>
</dbReference>
<dbReference type="PDB" id="6JRL">
    <property type="method" value="X-ray"/>
    <property type="resolution" value="2.20 A"/>
    <property type="chains" value="A=1-510"/>
</dbReference>
<dbReference type="PDBsum" id="6JRL"/>
<dbReference type="SMR" id="P18486"/>
<dbReference type="BioGRID" id="61173">
    <property type="interactions" value="2"/>
</dbReference>
<dbReference type="FunCoup" id="P18486">
    <property type="interactions" value="38"/>
</dbReference>
<dbReference type="IntAct" id="P18486">
    <property type="interactions" value="3"/>
</dbReference>
<dbReference type="STRING" id="7227.FBpp0080698"/>
<dbReference type="PaxDb" id="7227-FBpp0080697"/>
<dbReference type="DNASU" id="35188"/>
<dbReference type="EnsemblMetazoa" id="FBtr0081153">
    <molecule id="P18486-2"/>
    <property type="protein sequence ID" value="FBpp0080697"/>
    <property type="gene ID" value="FBgn0000075"/>
</dbReference>
<dbReference type="EnsemblMetazoa" id="FBtr0081154">
    <molecule id="P18486-1"/>
    <property type="protein sequence ID" value="FBpp0080698"/>
    <property type="gene ID" value="FBgn0000075"/>
</dbReference>
<dbReference type="GeneID" id="35188"/>
<dbReference type="KEGG" id="dme:Dmel_CG10501"/>
<dbReference type="UCSC" id="CG10501-RB">
    <property type="organism name" value="d. melanogaster"/>
</dbReference>
<dbReference type="AGR" id="FB:FBgn0000075"/>
<dbReference type="CTD" id="11700"/>
<dbReference type="FlyBase" id="FBgn0000075">
    <property type="gene designation" value="amd"/>
</dbReference>
<dbReference type="VEuPathDB" id="VectorBase:FBgn0000075"/>
<dbReference type="eggNOG" id="KOG0628">
    <property type="taxonomic scope" value="Eukaryota"/>
</dbReference>
<dbReference type="HOGENOM" id="CLU_011856_3_0_1"/>
<dbReference type="InParanoid" id="P18486"/>
<dbReference type="OMA" id="VWITLRT"/>
<dbReference type="OrthoDB" id="639767at2759"/>
<dbReference type="PhylomeDB" id="P18486"/>
<dbReference type="BRENDA" id="4.1.1.107">
    <property type="organism ID" value="1994"/>
</dbReference>
<dbReference type="SignaLink" id="P18486"/>
<dbReference type="BioGRID-ORCS" id="35188">
    <property type="hits" value="0 hits in 1 CRISPR screen"/>
</dbReference>
<dbReference type="GenomeRNAi" id="35188"/>
<dbReference type="PRO" id="PR:P18486"/>
<dbReference type="Proteomes" id="UP000000803">
    <property type="component" value="Chromosome 2L"/>
</dbReference>
<dbReference type="Bgee" id="FBgn0000075">
    <property type="expression patterns" value="Expressed in embryonic/larval foregut (Drosophila) and 38 other cell types or tissues"/>
</dbReference>
<dbReference type="ExpressionAtlas" id="P18486">
    <property type="expression patterns" value="baseline and differential"/>
</dbReference>
<dbReference type="GO" id="GO:0005737">
    <property type="term" value="C:cytoplasm"/>
    <property type="evidence" value="ECO:0000318"/>
    <property type="project" value="GO_Central"/>
</dbReference>
<dbReference type="GO" id="GO:0106425">
    <property type="term" value="F:3,4-dihydroxyphenylacetaldehyde synthase activity"/>
    <property type="evidence" value="ECO:0000314"/>
    <property type="project" value="FlyBase"/>
</dbReference>
<dbReference type="GO" id="GO:0004058">
    <property type="term" value="F:aromatic-L-amino-acid decarboxylase activity"/>
    <property type="evidence" value="ECO:0000318"/>
    <property type="project" value="GO_Central"/>
</dbReference>
<dbReference type="GO" id="GO:0016831">
    <property type="term" value="F:carboxy-lyase activity"/>
    <property type="evidence" value="ECO:0000303"/>
    <property type="project" value="UniProtKB"/>
</dbReference>
<dbReference type="GO" id="GO:0030170">
    <property type="term" value="F:pyridoxal phosphate binding"/>
    <property type="evidence" value="ECO:0007669"/>
    <property type="project" value="InterPro"/>
</dbReference>
<dbReference type="GO" id="GO:0042302">
    <property type="term" value="F:structural constituent of cuticle"/>
    <property type="evidence" value="ECO:0007669"/>
    <property type="project" value="UniProtKB-KW"/>
</dbReference>
<dbReference type="GO" id="GO:0006520">
    <property type="term" value="P:amino acid metabolic process"/>
    <property type="evidence" value="ECO:0007669"/>
    <property type="project" value="InterPro"/>
</dbReference>
<dbReference type="GO" id="GO:0019752">
    <property type="term" value="P:carboxylic acid metabolic process"/>
    <property type="evidence" value="ECO:0007669"/>
    <property type="project" value="InterPro"/>
</dbReference>
<dbReference type="GO" id="GO:0006584">
    <property type="term" value="P:catecholamine metabolic process"/>
    <property type="evidence" value="ECO:0000315"/>
    <property type="project" value="UniProtKB"/>
</dbReference>
<dbReference type="GO" id="GO:0040003">
    <property type="term" value="P:chitin-based cuticle development"/>
    <property type="evidence" value="ECO:0000315"/>
    <property type="project" value="UniProtKB"/>
</dbReference>
<dbReference type="GO" id="GO:0042335">
    <property type="term" value="P:cuticle development"/>
    <property type="evidence" value="ECO:0000250"/>
    <property type="project" value="UniProtKB"/>
</dbReference>
<dbReference type="CDD" id="cd06450">
    <property type="entry name" value="DOPA_deC_like"/>
    <property type="match status" value="1"/>
</dbReference>
<dbReference type="FunFam" id="1.20.1340.10:FF:000001">
    <property type="entry name" value="Histidine decarboxylase"/>
    <property type="match status" value="1"/>
</dbReference>
<dbReference type="FunFam" id="3.40.640.10:FF:000025">
    <property type="entry name" value="Histidine decarboxylase"/>
    <property type="match status" value="1"/>
</dbReference>
<dbReference type="FunFam" id="3.90.1150.10:FF:000018">
    <property type="entry name" value="Histidine decarboxylase"/>
    <property type="match status" value="1"/>
</dbReference>
<dbReference type="Gene3D" id="3.90.1150.10">
    <property type="entry name" value="Aspartate Aminotransferase, domain 1"/>
    <property type="match status" value="1"/>
</dbReference>
<dbReference type="Gene3D" id="1.20.1340.10">
    <property type="entry name" value="dopa decarboxylase, N-terminal domain"/>
    <property type="match status" value="1"/>
</dbReference>
<dbReference type="Gene3D" id="3.40.640.10">
    <property type="entry name" value="Type I PLP-dependent aspartate aminotransferase-like (Major domain)"/>
    <property type="match status" value="1"/>
</dbReference>
<dbReference type="InterPro" id="IPR010977">
    <property type="entry name" value="Aromatic_deC"/>
</dbReference>
<dbReference type="InterPro" id="IPR002129">
    <property type="entry name" value="PyrdxlP-dep_de-COase"/>
</dbReference>
<dbReference type="InterPro" id="IPR015424">
    <property type="entry name" value="PyrdxlP-dep_Trfase"/>
</dbReference>
<dbReference type="InterPro" id="IPR015421">
    <property type="entry name" value="PyrdxlP-dep_Trfase_major"/>
</dbReference>
<dbReference type="InterPro" id="IPR015422">
    <property type="entry name" value="PyrdxlP-dep_Trfase_small"/>
</dbReference>
<dbReference type="InterPro" id="IPR021115">
    <property type="entry name" value="Pyridoxal-P_BS"/>
</dbReference>
<dbReference type="PANTHER" id="PTHR11999:SF60">
    <property type="entry name" value="3,4-DIHYDROXYPHENYLACETALDEHYDE SYNTHASE"/>
    <property type="match status" value="1"/>
</dbReference>
<dbReference type="PANTHER" id="PTHR11999">
    <property type="entry name" value="GROUP II PYRIDOXAL-5-PHOSPHATE DECARBOXYLASE"/>
    <property type="match status" value="1"/>
</dbReference>
<dbReference type="Pfam" id="PF00282">
    <property type="entry name" value="Pyridoxal_deC"/>
    <property type="match status" value="1"/>
</dbReference>
<dbReference type="PRINTS" id="PR00800">
    <property type="entry name" value="YHDCRBOXLASE"/>
</dbReference>
<dbReference type="SUPFAM" id="SSF53383">
    <property type="entry name" value="PLP-dependent transferases"/>
    <property type="match status" value="1"/>
</dbReference>
<dbReference type="PROSITE" id="PS00392">
    <property type="entry name" value="DDC_GAD_HDC_YDC"/>
    <property type="match status" value="1"/>
</dbReference>
<feature type="chain" id="PRO_0000147010" description="3,4-dihydroxyphenylacetaldehyde synthase">
    <location>
        <begin position="1"/>
        <end position="510"/>
    </location>
</feature>
<feature type="active site" evidence="7">
    <location>
        <position position="192"/>
    </location>
</feature>
<feature type="modified residue" description="N6-(pyridoxal phosphate)lysine" evidence="6">
    <location>
        <position position="303"/>
    </location>
</feature>
<feature type="splice variant" id="VSP_060031" description="In isoform B.">
    <original>MDAKEFREFGKAAIDYIADYLENIRDDDVLPNVEPGYLLDLLPTEMPEEPEAWKDVLGDISRVIKPGLTHWQSPHMHAYYPTSTSYPSIVGEMLASGFGVI</original>
    <variation>MDFDEFREFGHASIEFLINYLSGIRERDVLPSTAPYAVINQLPKEIPEQPDHWREVLKDLENIILPGLTHWQSPYFNAFYPSSSSAGSIIGELLIAGIGVL</variation>
    <location>
        <begin position="1"/>
        <end position="101"/>
    </location>
</feature>
<feature type="mutagenesis site" description="Enzymatic shift from L-dopa decarboxylation-oxidative deamination to L-Dopa decarboxylation." evidence="3">
    <original>N</original>
    <variation>H</variation>
    <location>
        <position position="192"/>
    </location>
</feature>
<feature type="sequence conflict" description="In Ref. 1; CAA28400." evidence="6" ref="1">
    <original>WQ</original>
    <variation>SE</variation>
    <location>
        <begin position="71"/>
        <end position="72"/>
    </location>
</feature>
<feature type="sequence conflict" description="In Ref. 1; CAA28400." evidence="6" ref="1">
    <original>G</original>
    <variation>E</variation>
    <location>
        <position position="370"/>
    </location>
</feature>
<feature type="sequence conflict" description="In Ref. 1; CAA28400." evidence="6" ref="1">
    <original>R</original>
    <variation>A</variation>
    <location>
        <position position="379"/>
    </location>
</feature>
<feature type="sequence conflict" description="In Ref. 1; CAA28400." evidence="6" ref="1">
    <original>EQ</original>
    <variation>DE</variation>
    <location>
        <begin position="477"/>
        <end position="478"/>
    </location>
</feature>
<feature type="sequence conflict" description="In Ref. 1; CAA28400." evidence="6" ref="1">
    <original>QH</original>
    <variation>HD</variation>
    <location>
        <begin position="493"/>
        <end position="494"/>
    </location>
</feature>
<feature type="helix" evidence="9">
    <location>
        <begin position="3"/>
        <end position="22"/>
    </location>
</feature>
<feature type="helix" evidence="9">
    <location>
        <begin position="24"/>
        <end position="26"/>
    </location>
</feature>
<feature type="helix" evidence="9">
    <location>
        <begin position="37"/>
        <end position="41"/>
    </location>
</feature>
<feature type="helix" evidence="9">
    <location>
        <begin position="53"/>
        <end position="63"/>
    </location>
</feature>
<feature type="helix" evidence="9">
    <location>
        <begin position="65"/>
        <end position="67"/>
    </location>
</feature>
<feature type="strand" evidence="9">
    <location>
        <begin position="78"/>
        <end position="80"/>
    </location>
</feature>
<feature type="helix" evidence="9">
    <location>
        <begin position="86"/>
        <end position="98"/>
    </location>
</feature>
<feature type="helix" evidence="9">
    <location>
        <begin position="105"/>
        <end position="107"/>
    </location>
</feature>
<feature type="helix" evidence="9">
    <location>
        <begin position="109"/>
        <end position="125"/>
    </location>
</feature>
<feature type="helix" evidence="9">
    <location>
        <begin position="130"/>
        <end position="132"/>
    </location>
</feature>
<feature type="strand" evidence="9">
    <location>
        <begin position="133"/>
        <end position="139"/>
    </location>
</feature>
<feature type="strand" evidence="9">
    <location>
        <begin position="141"/>
        <end position="146"/>
    </location>
</feature>
<feature type="helix" evidence="9">
    <location>
        <begin position="148"/>
        <end position="168"/>
    </location>
</feature>
<feature type="helix" evidence="9">
    <location>
        <begin position="176"/>
        <end position="182"/>
    </location>
</feature>
<feature type="strand" evidence="9">
    <location>
        <begin position="183"/>
        <end position="188"/>
    </location>
</feature>
<feature type="helix" evidence="9">
    <location>
        <begin position="193"/>
        <end position="202"/>
    </location>
</feature>
<feature type="strand" evidence="9">
    <location>
        <begin position="206"/>
        <end position="209"/>
    </location>
</feature>
<feature type="helix" evidence="9">
    <location>
        <begin position="219"/>
        <end position="231"/>
    </location>
</feature>
<feature type="strand" evidence="9">
    <location>
        <begin position="235"/>
        <end position="244"/>
    </location>
</feature>
<feature type="turn" evidence="9">
    <location>
        <begin position="246"/>
        <end position="248"/>
    </location>
</feature>
<feature type="helix" evidence="9">
    <location>
        <begin position="254"/>
        <end position="263"/>
    </location>
</feature>
<feature type="strand" evidence="9">
    <location>
        <begin position="267"/>
        <end position="271"/>
    </location>
</feature>
<feature type="helix" evidence="9">
    <location>
        <begin position="275"/>
        <end position="280"/>
    </location>
</feature>
<feature type="helix" evidence="9">
    <location>
        <begin position="282"/>
        <end position="288"/>
    </location>
</feature>
<feature type="helix" evidence="9">
    <location>
        <begin position="291"/>
        <end position="293"/>
    </location>
</feature>
<feature type="strand" evidence="9">
    <location>
        <begin position="295"/>
        <end position="300"/>
    </location>
</feature>
<feature type="strand" evidence="9">
    <location>
        <begin position="312"/>
        <end position="317"/>
    </location>
</feature>
<feature type="helix" evidence="9">
    <location>
        <begin position="320"/>
        <end position="323"/>
    </location>
</feature>
<feature type="helix" evidence="9">
    <location>
        <begin position="346"/>
        <end position="348"/>
    </location>
</feature>
<feature type="strand" evidence="9">
    <location>
        <begin position="349"/>
        <end position="354"/>
    </location>
</feature>
<feature type="helix" evidence="9">
    <location>
        <begin position="359"/>
        <end position="394"/>
    </location>
</feature>
<feature type="strand" evidence="9">
    <location>
        <begin position="398"/>
        <end position="402"/>
    </location>
</feature>
<feature type="strand" evidence="9">
    <location>
        <begin position="408"/>
        <end position="415"/>
    </location>
</feature>
<feature type="helix" evidence="9">
    <location>
        <begin position="417"/>
        <end position="430"/>
    </location>
</feature>
<feature type="strand" evidence="9">
    <location>
        <begin position="432"/>
        <end position="434"/>
    </location>
</feature>
<feature type="strand" evidence="9">
    <location>
        <begin position="436"/>
        <end position="440"/>
    </location>
</feature>
<feature type="strand" evidence="9">
    <location>
        <begin position="443"/>
        <end position="449"/>
    </location>
</feature>
<feature type="helix" evidence="9">
    <location>
        <begin position="457"/>
        <end position="477"/>
    </location>
</feature>
<sequence>MDAKEFREFGKAAIDYIADYLENIRDDDVLPNVEPGYLLDLLPTEMPEEPEAWKDVLGDISRVIKPGLTHWQSPHMHAYYPTSTSYPSIVGEMLASGFGVIGFSWICSPACTELEVVVMDWLAKFLKLPAHFQHASDGPGGGVIQGSASEAVLVAVLAAREQAVANYRESHPELSESEVRGRLVAYSSDQSNSCIEKAGVLAAMPIRLLPAGEDFVLRGDTLRGAIEEDVAAGRIPVICVATLGTTGTCAYDDIESLSAVCEEFKVWLHVDAAYAGGAFALEECSDLRKGLDRVDSLNFNLHKFMLVNFDCSAMWLRDANKVVDSFNVDRIYLKHKHEGQSQIPDFRHWQIPLGRRFRALKVWITFRTLGAEGLRNHVRKHIELAKQFEQLVLKDSRFELVAPRALGLVCFRPKGDNEITTQLLQRLMDRKKIYMVKAEHAGRQFLRFVVCGMDTKASDIDFAWQEIESQLTDLQAEQSLVARKSGNVGDLAQHFQIHLSTENATHEKSQ</sequence>
<proteinExistence type="evidence at protein level"/>
<protein>
    <recommendedName>
        <fullName>3,4-dihydroxyphenylacetaldehyde synthase</fullName>
        <shortName>DHPAA synthase</shortName>
        <shortName evidence="1">DOPAL synthase</shortName>
        <ecNumber evidence="2 3">4.1.1.107</ecNumber>
    </recommendedName>
    <alternativeName>
        <fullName evidence="5">Alpha-methyldopa resistant protein</fullName>
        <shortName evidence="5">AMD-r protein</shortName>
    </alternativeName>
</protein>
<keyword id="KW-0002">3D-structure</keyword>
<keyword id="KW-0025">Alternative splicing</keyword>
<keyword id="KW-0128">Catecholamine metabolism</keyword>
<keyword id="KW-0193">Cuticle</keyword>
<keyword id="KW-0456">Lyase</keyword>
<keyword id="KW-0663">Pyridoxal phosphate</keyword>
<keyword id="KW-1185">Reference proteome</keyword>
<accession>P18486</accession>
<accession>Q9VIZ8</accession>
<accession>Q9VIZ9</accession>
<name>DHAPP_DROME</name>
<reference key="1">
    <citation type="journal article" date="1986" name="Genetics">
        <title>Molecular localization, developmental expression and nucleotide sequence of the alpha-methyldopa hypersensitive gene of Drosophila.</title>
        <authorList>
            <person name="Marsh J.L."/>
            <person name="Erfle M.P."/>
            <person name="Leeds C.A."/>
        </authorList>
    </citation>
    <scope>NUCLEOTIDE SEQUENCE [GENOMIC DNA]</scope>
</reference>
<reference key="2">
    <citation type="submission" date="1994-09" db="EMBL/GenBank/DDBJ databases">
        <authorList>
            <person name="Marsh J.L."/>
        </authorList>
    </citation>
    <scope>SEQUENCE REVISION</scope>
</reference>
<reference key="3">
    <citation type="journal article" date="2000" name="Science">
        <title>The genome sequence of Drosophila melanogaster.</title>
        <authorList>
            <person name="Adams M.D."/>
            <person name="Celniker S.E."/>
            <person name="Holt R.A."/>
            <person name="Evans C.A."/>
            <person name="Gocayne J.D."/>
            <person name="Amanatides P.G."/>
            <person name="Scherer S.E."/>
            <person name="Li P.W."/>
            <person name="Hoskins R.A."/>
            <person name="Galle R.F."/>
            <person name="George R.A."/>
            <person name="Lewis S.E."/>
            <person name="Richards S."/>
            <person name="Ashburner M."/>
            <person name="Henderson S.N."/>
            <person name="Sutton G.G."/>
            <person name="Wortman J.R."/>
            <person name="Yandell M.D."/>
            <person name="Zhang Q."/>
            <person name="Chen L.X."/>
            <person name="Brandon R.C."/>
            <person name="Rogers Y.-H.C."/>
            <person name="Blazej R.G."/>
            <person name="Champe M."/>
            <person name="Pfeiffer B.D."/>
            <person name="Wan K.H."/>
            <person name="Doyle C."/>
            <person name="Baxter E.G."/>
            <person name="Helt G."/>
            <person name="Nelson C.R."/>
            <person name="Miklos G.L.G."/>
            <person name="Abril J.F."/>
            <person name="Agbayani A."/>
            <person name="An H.-J."/>
            <person name="Andrews-Pfannkoch C."/>
            <person name="Baldwin D."/>
            <person name="Ballew R.M."/>
            <person name="Basu A."/>
            <person name="Baxendale J."/>
            <person name="Bayraktaroglu L."/>
            <person name="Beasley E.M."/>
            <person name="Beeson K.Y."/>
            <person name="Benos P.V."/>
            <person name="Berman B.P."/>
            <person name="Bhandari D."/>
            <person name="Bolshakov S."/>
            <person name="Borkova D."/>
            <person name="Botchan M.R."/>
            <person name="Bouck J."/>
            <person name="Brokstein P."/>
            <person name="Brottier P."/>
            <person name="Burtis K.C."/>
            <person name="Busam D.A."/>
            <person name="Butler H."/>
            <person name="Cadieu E."/>
            <person name="Center A."/>
            <person name="Chandra I."/>
            <person name="Cherry J.M."/>
            <person name="Cawley S."/>
            <person name="Dahlke C."/>
            <person name="Davenport L.B."/>
            <person name="Davies P."/>
            <person name="de Pablos B."/>
            <person name="Delcher A."/>
            <person name="Deng Z."/>
            <person name="Mays A.D."/>
            <person name="Dew I."/>
            <person name="Dietz S.M."/>
            <person name="Dodson K."/>
            <person name="Doup L.E."/>
            <person name="Downes M."/>
            <person name="Dugan-Rocha S."/>
            <person name="Dunkov B.C."/>
            <person name="Dunn P."/>
            <person name="Durbin K.J."/>
            <person name="Evangelista C.C."/>
            <person name="Ferraz C."/>
            <person name="Ferriera S."/>
            <person name="Fleischmann W."/>
            <person name="Fosler C."/>
            <person name="Gabrielian A.E."/>
            <person name="Garg N.S."/>
            <person name="Gelbart W.M."/>
            <person name="Glasser K."/>
            <person name="Glodek A."/>
            <person name="Gong F."/>
            <person name="Gorrell J.H."/>
            <person name="Gu Z."/>
            <person name="Guan P."/>
            <person name="Harris M."/>
            <person name="Harris N.L."/>
            <person name="Harvey D.A."/>
            <person name="Heiman T.J."/>
            <person name="Hernandez J.R."/>
            <person name="Houck J."/>
            <person name="Hostin D."/>
            <person name="Houston K.A."/>
            <person name="Howland T.J."/>
            <person name="Wei M.-H."/>
            <person name="Ibegwam C."/>
            <person name="Jalali M."/>
            <person name="Kalush F."/>
            <person name="Karpen G.H."/>
            <person name="Ke Z."/>
            <person name="Kennison J.A."/>
            <person name="Ketchum K.A."/>
            <person name="Kimmel B.E."/>
            <person name="Kodira C.D."/>
            <person name="Kraft C.L."/>
            <person name="Kravitz S."/>
            <person name="Kulp D."/>
            <person name="Lai Z."/>
            <person name="Lasko P."/>
            <person name="Lei Y."/>
            <person name="Levitsky A.A."/>
            <person name="Li J.H."/>
            <person name="Li Z."/>
            <person name="Liang Y."/>
            <person name="Lin X."/>
            <person name="Liu X."/>
            <person name="Mattei B."/>
            <person name="McIntosh T.C."/>
            <person name="McLeod M.P."/>
            <person name="McPherson D."/>
            <person name="Merkulov G."/>
            <person name="Milshina N.V."/>
            <person name="Mobarry C."/>
            <person name="Morris J."/>
            <person name="Moshrefi A."/>
            <person name="Mount S.M."/>
            <person name="Moy M."/>
            <person name="Murphy B."/>
            <person name="Murphy L."/>
            <person name="Muzny D.M."/>
            <person name="Nelson D.L."/>
            <person name="Nelson D.R."/>
            <person name="Nelson K.A."/>
            <person name="Nixon K."/>
            <person name="Nusskern D.R."/>
            <person name="Pacleb J.M."/>
            <person name="Palazzolo M."/>
            <person name="Pittman G.S."/>
            <person name="Pan S."/>
            <person name="Pollard J."/>
            <person name="Puri V."/>
            <person name="Reese M.G."/>
            <person name="Reinert K."/>
            <person name="Remington K."/>
            <person name="Saunders R.D.C."/>
            <person name="Scheeler F."/>
            <person name="Shen H."/>
            <person name="Shue B.C."/>
            <person name="Siden-Kiamos I."/>
            <person name="Simpson M."/>
            <person name="Skupski M.P."/>
            <person name="Smith T.J."/>
            <person name="Spier E."/>
            <person name="Spradling A.C."/>
            <person name="Stapleton M."/>
            <person name="Strong R."/>
            <person name="Sun E."/>
            <person name="Svirskas R."/>
            <person name="Tector C."/>
            <person name="Turner R."/>
            <person name="Venter E."/>
            <person name="Wang A.H."/>
            <person name="Wang X."/>
            <person name="Wang Z.-Y."/>
            <person name="Wassarman D.A."/>
            <person name="Weinstock G.M."/>
            <person name="Weissenbach J."/>
            <person name="Williams S.M."/>
            <person name="Woodage T."/>
            <person name="Worley K.C."/>
            <person name="Wu D."/>
            <person name="Yang S."/>
            <person name="Yao Q.A."/>
            <person name="Ye J."/>
            <person name="Yeh R.-F."/>
            <person name="Zaveri J.S."/>
            <person name="Zhan M."/>
            <person name="Zhang G."/>
            <person name="Zhao Q."/>
            <person name="Zheng L."/>
            <person name="Zheng X.H."/>
            <person name="Zhong F.N."/>
            <person name="Zhong W."/>
            <person name="Zhou X."/>
            <person name="Zhu S.C."/>
            <person name="Zhu X."/>
            <person name="Smith H.O."/>
            <person name="Gibbs R.A."/>
            <person name="Myers E.W."/>
            <person name="Rubin G.M."/>
            <person name="Venter J.C."/>
        </authorList>
    </citation>
    <scope>NUCLEOTIDE SEQUENCE [LARGE SCALE GENOMIC DNA] (ISOFORMS A AND B)</scope>
    <source>
        <strain>Berkeley</strain>
    </source>
</reference>
<reference key="4">
    <citation type="journal article" date="2002" name="Genome Biol.">
        <title>Annotation of the Drosophila melanogaster euchromatic genome: a systematic review.</title>
        <authorList>
            <person name="Misra S."/>
            <person name="Crosby M.A."/>
            <person name="Mungall C.J."/>
            <person name="Matthews B.B."/>
            <person name="Campbell K.S."/>
            <person name="Hradecky P."/>
            <person name="Huang Y."/>
            <person name="Kaminker J.S."/>
            <person name="Millburn G.H."/>
            <person name="Prochnik S.E."/>
            <person name="Smith C.D."/>
            <person name="Tupy J.L."/>
            <person name="Whitfield E.J."/>
            <person name="Bayraktaroglu L."/>
            <person name="Berman B.P."/>
            <person name="Bettencourt B.R."/>
            <person name="Celniker S.E."/>
            <person name="de Grey A.D.N.J."/>
            <person name="Drysdale R.A."/>
            <person name="Harris N.L."/>
            <person name="Richter J."/>
            <person name="Russo S."/>
            <person name="Schroeder A.J."/>
            <person name="Shu S.Q."/>
            <person name="Stapleton M."/>
            <person name="Yamada C."/>
            <person name="Ashburner M."/>
            <person name="Gelbart W.M."/>
            <person name="Rubin G.M."/>
            <person name="Lewis S.E."/>
        </authorList>
    </citation>
    <scope>GENOME REANNOTATION</scope>
    <source>
        <strain>Berkeley</strain>
    </source>
</reference>
<reference key="5">
    <citation type="submission" date="2008-09" db="EMBL/GenBank/DDBJ databases">
        <authorList>
            <person name="Carlson J."/>
            <person name="Booth B."/>
            <person name="Frise E."/>
            <person name="Park S."/>
            <person name="Wan K."/>
            <person name="Yu C."/>
            <person name="Celniker S."/>
        </authorList>
    </citation>
    <scope>NUCLEOTIDE SEQUENCE [LARGE SCALE MRNA]</scope>
</reference>
<reference key="6">
    <citation type="journal article" date="1995" name="Dev. Biol.">
        <title>Developmental regulation of the alpha-methyldopa hypersensitive gene of Drosophila melanogaster.</title>
        <authorList>
            <person name="Wang D."/>
            <person name="Marsh J.L."/>
        </authorList>
    </citation>
    <scope>FUNCTION</scope>
</reference>
<reference key="7">
    <citation type="journal article" date="2011" name="PLoS ONE">
        <title>From L-dopa to dihydroxyphenylacetaldehyde: a toxic biochemical pathway plays a vital physiological function in insects.</title>
        <authorList>
            <person name="Vavricka C."/>
            <person name="Han Q."/>
            <person name="Huang Y."/>
            <person name="Erickson S.M."/>
            <person name="Harich K."/>
            <person name="Christensen B.M."/>
            <person name="Li J."/>
        </authorList>
    </citation>
    <scope>FUNCTION</scope>
    <scope>CATALYTIC ACTIVITY</scope>
</reference>
<reference key="8">
    <citation type="journal article" date="2017" name="Insect Biochem. Mol. Biol.">
        <title>Biochemical identification of residues that discriminate between 3,4-dihydroxyphenylalanine decarboxylase and 3,4-dihydroxyphenylacetaldehyde synthase-mediated reactions.</title>
        <authorList>
            <person name="Liang J."/>
            <person name="Han Q."/>
            <person name="Ding H."/>
            <person name="Li J."/>
        </authorList>
    </citation>
    <scope>CATALYTIC ACTIVITY</scope>
    <scope>MUTAGENESIS OF ASN-192</scope>
    <scope>BIOPHYSICOCHEMICAL PROPERTIES</scope>
    <scope>ACTIVE SITE</scope>
    <scope>COFACTOR</scope>
</reference>
<reference key="9">
    <citation type="journal article" date="2018" name="Dev. Comp. Immunol.">
        <title>3,4-Dihydroxyphenylacetaldehyde synthase and cuticle formation in insects.</title>
        <authorList>
            <person name="Liao C."/>
            <person name="Upadhyay A."/>
            <person name="Liang J."/>
            <person name="Han Q."/>
            <person name="Li J."/>
        </authorList>
    </citation>
    <scope>REVIEW</scope>
</reference>
<comment type="function">
    <text evidence="2 8">Catalyzes the decarboxylation-oxidative deamination of L-3,4-dihydroxyphenylalanine (L-DOPA) to 3,4-dihydroxylphenylacetaldehyde (DHPAA) (PubMed:21283636). Involved in cuticle development (Probable). Probably responsible for the protein cross-linking during the development of flexible cuticles (PubMed:21283636).</text>
</comment>
<comment type="catalytic activity">
    <reaction evidence="2 3">
        <text>L-dopa + O2 + H2O + H(+) = 3,4-dihydroxyphenylacetaldehyde + H2O2 + NH4(+) + CO2</text>
        <dbReference type="Rhea" id="RHEA:55524"/>
        <dbReference type="ChEBI" id="CHEBI:15377"/>
        <dbReference type="ChEBI" id="CHEBI:15378"/>
        <dbReference type="ChEBI" id="CHEBI:15379"/>
        <dbReference type="ChEBI" id="CHEBI:16240"/>
        <dbReference type="ChEBI" id="CHEBI:16526"/>
        <dbReference type="ChEBI" id="CHEBI:27978"/>
        <dbReference type="ChEBI" id="CHEBI:28938"/>
        <dbReference type="ChEBI" id="CHEBI:57504"/>
        <dbReference type="EC" id="4.1.1.107"/>
    </reaction>
    <physiologicalReaction direction="left-to-right" evidence="2 3">
        <dbReference type="Rhea" id="RHEA:55525"/>
    </physiologicalReaction>
</comment>
<comment type="cofactor">
    <cofactor evidence="7">
        <name>pyridoxal 5'-phosphate</name>
        <dbReference type="ChEBI" id="CHEBI:597326"/>
    </cofactor>
</comment>
<comment type="biophysicochemical properties">
    <kinetics>
        <KM evidence="3">0.88 mM for L-Dopa</KM>
    </kinetics>
</comment>
<comment type="alternative products">
    <event type="alternative splicing"/>
    <isoform>
        <id>P18486-1</id>
        <name>A</name>
        <sequence type="displayed"/>
    </isoform>
    <isoform>
        <id>P18486-2</id>
        <name>B</name>
        <sequence type="described" ref="VSP_060031"/>
    </isoform>
    <text evidence="6">The 2 isoforms are probably produced by alternative splicing.</text>
</comment>
<comment type="developmental stage">
    <text evidence="4">Reaches a maximum in mid-embryogenesis.</text>
</comment>
<comment type="similarity">
    <text evidence="6">Belongs to the group II decarboxylase family.</text>
</comment>
<evidence type="ECO:0000250" key="1">
    <source>
        <dbReference type="UniProtKB" id="Q16S21"/>
    </source>
</evidence>
<evidence type="ECO:0000269" key="2">
    <source>
    </source>
</evidence>
<evidence type="ECO:0000269" key="3">
    <source>
    </source>
</evidence>
<evidence type="ECO:0000269" key="4">
    <source>
    </source>
</evidence>
<evidence type="ECO:0000303" key="5">
    <source>
    </source>
</evidence>
<evidence type="ECO:0000305" key="6"/>
<evidence type="ECO:0000305" key="7">
    <source>
    </source>
</evidence>
<evidence type="ECO:0000305" key="8">
    <source>
    </source>
</evidence>
<evidence type="ECO:0007829" key="9">
    <source>
        <dbReference type="PDB" id="6JRL"/>
    </source>
</evidence>
<organism>
    <name type="scientific">Drosophila melanogaster</name>
    <name type="common">Fruit fly</name>
    <dbReference type="NCBI Taxonomy" id="7227"/>
    <lineage>
        <taxon>Eukaryota</taxon>
        <taxon>Metazoa</taxon>
        <taxon>Ecdysozoa</taxon>
        <taxon>Arthropoda</taxon>
        <taxon>Hexapoda</taxon>
        <taxon>Insecta</taxon>
        <taxon>Pterygota</taxon>
        <taxon>Neoptera</taxon>
        <taxon>Endopterygota</taxon>
        <taxon>Diptera</taxon>
        <taxon>Brachycera</taxon>
        <taxon>Muscomorpha</taxon>
        <taxon>Ephydroidea</taxon>
        <taxon>Drosophilidae</taxon>
        <taxon>Drosophila</taxon>
        <taxon>Sophophora</taxon>
    </lineage>
</organism>